<accession>Q57J69</accession>
<comment type="function">
    <text evidence="1">Involved in the biosynthesis of the chorismate, which leads to the biosynthesis of aromatic amino acids. Catalyzes the reversible NADPH linked reduction of 3-dehydroshikimate (DHSA) to yield shikimate (SA).</text>
</comment>
<comment type="catalytic activity">
    <reaction evidence="1">
        <text>shikimate + NADP(+) = 3-dehydroshikimate + NADPH + H(+)</text>
        <dbReference type="Rhea" id="RHEA:17737"/>
        <dbReference type="ChEBI" id="CHEBI:15378"/>
        <dbReference type="ChEBI" id="CHEBI:16630"/>
        <dbReference type="ChEBI" id="CHEBI:36208"/>
        <dbReference type="ChEBI" id="CHEBI:57783"/>
        <dbReference type="ChEBI" id="CHEBI:58349"/>
        <dbReference type="EC" id="1.1.1.25"/>
    </reaction>
</comment>
<comment type="pathway">
    <text evidence="1">Metabolic intermediate biosynthesis; chorismate biosynthesis; chorismate from D-erythrose 4-phosphate and phosphoenolpyruvate: step 4/7.</text>
</comment>
<comment type="subunit">
    <text evidence="1">Homodimer.</text>
</comment>
<comment type="similarity">
    <text evidence="1">Belongs to the shikimate dehydrogenase family.</text>
</comment>
<keyword id="KW-0028">Amino-acid biosynthesis</keyword>
<keyword id="KW-0057">Aromatic amino acid biosynthesis</keyword>
<keyword id="KW-0521">NADP</keyword>
<keyword id="KW-0560">Oxidoreductase</keyword>
<dbReference type="EC" id="1.1.1.25" evidence="1"/>
<dbReference type="EMBL" id="AE017220">
    <property type="protein sequence ID" value="AAX67243.1"/>
    <property type="molecule type" value="Genomic_DNA"/>
</dbReference>
<dbReference type="RefSeq" id="WP_001540996.1">
    <property type="nucleotide sequence ID" value="NC_006905.1"/>
</dbReference>
<dbReference type="SMR" id="Q57J69"/>
<dbReference type="KEGG" id="sec:SCH_3337"/>
<dbReference type="HOGENOM" id="CLU_044063_2_1_6"/>
<dbReference type="UniPathway" id="UPA00053">
    <property type="reaction ID" value="UER00087"/>
</dbReference>
<dbReference type="Proteomes" id="UP000000538">
    <property type="component" value="Chromosome"/>
</dbReference>
<dbReference type="GO" id="GO:0005829">
    <property type="term" value="C:cytosol"/>
    <property type="evidence" value="ECO:0007669"/>
    <property type="project" value="TreeGrafter"/>
</dbReference>
<dbReference type="GO" id="GO:0050661">
    <property type="term" value="F:NADP binding"/>
    <property type="evidence" value="ECO:0007669"/>
    <property type="project" value="InterPro"/>
</dbReference>
<dbReference type="GO" id="GO:0004764">
    <property type="term" value="F:shikimate 3-dehydrogenase (NADP+) activity"/>
    <property type="evidence" value="ECO:0007669"/>
    <property type="project" value="UniProtKB-UniRule"/>
</dbReference>
<dbReference type="GO" id="GO:0008652">
    <property type="term" value="P:amino acid biosynthetic process"/>
    <property type="evidence" value="ECO:0007669"/>
    <property type="project" value="UniProtKB-KW"/>
</dbReference>
<dbReference type="GO" id="GO:0009073">
    <property type="term" value="P:aromatic amino acid family biosynthetic process"/>
    <property type="evidence" value="ECO:0007669"/>
    <property type="project" value="UniProtKB-KW"/>
</dbReference>
<dbReference type="GO" id="GO:0009423">
    <property type="term" value="P:chorismate biosynthetic process"/>
    <property type="evidence" value="ECO:0007669"/>
    <property type="project" value="UniProtKB-UniRule"/>
</dbReference>
<dbReference type="GO" id="GO:0019632">
    <property type="term" value="P:shikimate metabolic process"/>
    <property type="evidence" value="ECO:0007669"/>
    <property type="project" value="InterPro"/>
</dbReference>
<dbReference type="CDD" id="cd01065">
    <property type="entry name" value="NAD_bind_Shikimate_DH"/>
    <property type="match status" value="1"/>
</dbReference>
<dbReference type="FunFam" id="3.40.50.10860:FF:000006">
    <property type="entry name" value="Shikimate dehydrogenase (NADP(+))"/>
    <property type="match status" value="1"/>
</dbReference>
<dbReference type="FunFam" id="3.40.50.720:FF:000104">
    <property type="entry name" value="Shikimate dehydrogenase (NADP(+))"/>
    <property type="match status" value="1"/>
</dbReference>
<dbReference type="Gene3D" id="3.40.50.10860">
    <property type="entry name" value="Leucine Dehydrogenase, chain A, domain 1"/>
    <property type="match status" value="1"/>
</dbReference>
<dbReference type="Gene3D" id="3.40.50.720">
    <property type="entry name" value="NAD(P)-binding Rossmann-like Domain"/>
    <property type="match status" value="1"/>
</dbReference>
<dbReference type="HAMAP" id="MF_00222">
    <property type="entry name" value="Shikimate_DH_AroE"/>
    <property type="match status" value="1"/>
</dbReference>
<dbReference type="InterPro" id="IPR046346">
    <property type="entry name" value="Aminoacid_DH-like_N_sf"/>
</dbReference>
<dbReference type="InterPro" id="IPR036291">
    <property type="entry name" value="NAD(P)-bd_dom_sf"/>
</dbReference>
<dbReference type="InterPro" id="IPR041121">
    <property type="entry name" value="SDH_C"/>
</dbReference>
<dbReference type="InterPro" id="IPR011342">
    <property type="entry name" value="Shikimate_DH"/>
</dbReference>
<dbReference type="InterPro" id="IPR013708">
    <property type="entry name" value="Shikimate_DH-bd_N"/>
</dbReference>
<dbReference type="InterPro" id="IPR022893">
    <property type="entry name" value="Shikimate_DH_fam"/>
</dbReference>
<dbReference type="InterPro" id="IPR006151">
    <property type="entry name" value="Shikm_DH/Glu-tRNA_Rdtase"/>
</dbReference>
<dbReference type="NCBIfam" id="TIGR00507">
    <property type="entry name" value="aroE"/>
    <property type="match status" value="1"/>
</dbReference>
<dbReference type="NCBIfam" id="NF001310">
    <property type="entry name" value="PRK00258.1-2"/>
    <property type="match status" value="1"/>
</dbReference>
<dbReference type="PANTHER" id="PTHR21089:SF1">
    <property type="entry name" value="BIFUNCTIONAL 3-DEHYDROQUINATE DEHYDRATASE_SHIKIMATE DEHYDROGENASE, CHLOROPLASTIC"/>
    <property type="match status" value="1"/>
</dbReference>
<dbReference type="PANTHER" id="PTHR21089">
    <property type="entry name" value="SHIKIMATE DEHYDROGENASE"/>
    <property type="match status" value="1"/>
</dbReference>
<dbReference type="Pfam" id="PF18317">
    <property type="entry name" value="SDH_C"/>
    <property type="match status" value="1"/>
</dbReference>
<dbReference type="Pfam" id="PF01488">
    <property type="entry name" value="Shikimate_DH"/>
    <property type="match status" value="1"/>
</dbReference>
<dbReference type="Pfam" id="PF08501">
    <property type="entry name" value="Shikimate_dh_N"/>
    <property type="match status" value="1"/>
</dbReference>
<dbReference type="SUPFAM" id="SSF53223">
    <property type="entry name" value="Aminoacid dehydrogenase-like, N-terminal domain"/>
    <property type="match status" value="1"/>
</dbReference>
<dbReference type="SUPFAM" id="SSF51735">
    <property type="entry name" value="NAD(P)-binding Rossmann-fold domains"/>
    <property type="match status" value="1"/>
</dbReference>
<sequence length="272" mass="29362">METYAVFGNPIAHSKSPFIHQQFAQQLDIVHPYGRVLAPINNFINTLDAFFAAGGKGANITVPFKEEAFARSDELTERASLAGAVNTLKRLEDGRLLGDNTDGIGLLSDLKRLNFIRPGWRILLIGAGGASRGVLLPLLSLDCAVTITNRTASRAEALAKIFAHTGSVHATDMDKLDGCEFDLIVNATSSGIRGEIPAIPASLIHPSLCCYDMFYQKGNTPFLSWCVQQGAKRYADGLGMLVGQAAHAVLLWHGVLPQVEPVIKLLQQELLA</sequence>
<proteinExistence type="inferred from homology"/>
<reference key="1">
    <citation type="journal article" date="2005" name="Nucleic Acids Res.">
        <title>The genome sequence of Salmonella enterica serovar Choleraesuis, a highly invasive and resistant zoonotic pathogen.</title>
        <authorList>
            <person name="Chiu C.-H."/>
            <person name="Tang P."/>
            <person name="Chu C."/>
            <person name="Hu S."/>
            <person name="Bao Q."/>
            <person name="Yu J."/>
            <person name="Chou Y.-Y."/>
            <person name="Wang H.-S."/>
            <person name="Lee Y.-S."/>
        </authorList>
    </citation>
    <scope>NUCLEOTIDE SEQUENCE [LARGE SCALE GENOMIC DNA]</scope>
    <source>
        <strain>SC-B67</strain>
    </source>
</reference>
<organism>
    <name type="scientific">Salmonella choleraesuis (strain SC-B67)</name>
    <dbReference type="NCBI Taxonomy" id="321314"/>
    <lineage>
        <taxon>Bacteria</taxon>
        <taxon>Pseudomonadati</taxon>
        <taxon>Pseudomonadota</taxon>
        <taxon>Gammaproteobacteria</taxon>
        <taxon>Enterobacterales</taxon>
        <taxon>Enterobacteriaceae</taxon>
        <taxon>Salmonella</taxon>
    </lineage>
</organism>
<feature type="chain" id="PRO_1000021328" description="Shikimate dehydrogenase (NADP(+))">
    <location>
        <begin position="1"/>
        <end position="272"/>
    </location>
</feature>
<feature type="active site" description="Proton acceptor" evidence="1">
    <location>
        <position position="65"/>
    </location>
</feature>
<feature type="binding site" evidence="1">
    <location>
        <begin position="14"/>
        <end position="16"/>
    </location>
    <ligand>
        <name>shikimate</name>
        <dbReference type="ChEBI" id="CHEBI:36208"/>
    </ligand>
</feature>
<feature type="binding site" evidence="1">
    <location>
        <position position="61"/>
    </location>
    <ligand>
        <name>shikimate</name>
        <dbReference type="ChEBI" id="CHEBI:36208"/>
    </ligand>
</feature>
<feature type="binding site" evidence="1">
    <location>
        <position position="77"/>
    </location>
    <ligand>
        <name>NADP(+)</name>
        <dbReference type="ChEBI" id="CHEBI:58349"/>
    </ligand>
</feature>
<feature type="binding site" evidence="1">
    <location>
        <position position="86"/>
    </location>
    <ligand>
        <name>shikimate</name>
        <dbReference type="ChEBI" id="CHEBI:36208"/>
    </ligand>
</feature>
<feature type="binding site" evidence="1">
    <location>
        <position position="102"/>
    </location>
    <ligand>
        <name>shikimate</name>
        <dbReference type="ChEBI" id="CHEBI:36208"/>
    </ligand>
</feature>
<feature type="binding site" evidence="1">
    <location>
        <begin position="126"/>
        <end position="130"/>
    </location>
    <ligand>
        <name>NADP(+)</name>
        <dbReference type="ChEBI" id="CHEBI:58349"/>
    </ligand>
</feature>
<feature type="binding site" evidence="1">
    <location>
        <begin position="149"/>
        <end position="154"/>
    </location>
    <ligand>
        <name>NADP(+)</name>
        <dbReference type="ChEBI" id="CHEBI:58349"/>
    </ligand>
</feature>
<feature type="binding site" evidence="1">
    <location>
        <position position="213"/>
    </location>
    <ligand>
        <name>NADP(+)</name>
        <dbReference type="ChEBI" id="CHEBI:58349"/>
    </ligand>
</feature>
<feature type="binding site" evidence="1">
    <location>
        <position position="215"/>
    </location>
    <ligand>
        <name>shikimate</name>
        <dbReference type="ChEBI" id="CHEBI:36208"/>
    </ligand>
</feature>
<feature type="binding site" evidence="1">
    <location>
        <position position="237"/>
    </location>
    <ligand>
        <name>NADP(+)</name>
        <dbReference type="ChEBI" id="CHEBI:58349"/>
    </ligand>
</feature>
<name>AROE_SALCH</name>
<protein>
    <recommendedName>
        <fullName evidence="1">Shikimate dehydrogenase (NADP(+))</fullName>
        <shortName evidence="1">SDH</shortName>
        <ecNumber evidence="1">1.1.1.25</ecNumber>
    </recommendedName>
</protein>
<gene>
    <name evidence="1" type="primary">aroE</name>
    <name type="ordered locus">SCH_3337</name>
</gene>
<evidence type="ECO:0000255" key="1">
    <source>
        <dbReference type="HAMAP-Rule" id="MF_00222"/>
    </source>
</evidence>